<proteinExistence type="inferred from homology"/>
<comment type="function">
    <text evidence="1">Component of the coat protein complex II (COPII) which promotes the formation of transport vesicles from the endoplasmic reticulum (ER). The coat has two main functions, the physical deformation of the endoplasmic reticulum membrane into vesicles and the selection of cargo molecules (By similarity).</text>
</comment>
<comment type="subunit">
    <text evidence="1">The COPII coat is composed of at least 5 proteins: the SEC23/24 complex, the SEC13/31 complex, and the protein SAR1. Golgi apparatus membrane; Peripheral membrane protein; Cytoplasmic side.</text>
</comment>
<comment type="subcellular location">
    <subcellularLocation>
        <location evidence="1">Cytoplasm</location>
    </subcellularLocation>
    <subcellularLocation>
        <location evidence="1">Cytoplasmic vesicle</location>
        <location evidence="1">COPII-coated vesicle membrane</location>
        <topology evidence="1">Peripheral membrane protein</topology>
        <orientation evidence="1">Cytoplasmic side</orientation>
    </subcellularLocation>
    <subcellularLocation>
        <location evidence="1">Endoplasmic reticulum membrane</location>
        <topology evidence="1">Peripheral membrane protein</topology>
        <orientation evidence="1">Cytoplasmic side</orientation>
    </subcellularLocation>
    <subcellularLocation>
        <location evidence="1">Golgi apparatus membrane</location>
        <topology evidence="1">Peripheral membrane protein</topology>
        <orientation evidence="1">Cytoplasmic side</orientation>
    </subcellularLocation>
</comment>
<comment type="alternative products">
    <event type="alternative splicing"/>
    <isoform>
        <id>P0CR41-1</id>
        <name>1</name>
        <sequence type="displayed"/>
    </isoform>
    <isoform>
        <id>P0CR41-2</id>
        <name>2</name>
        <sequence type="described" ref="VSP_041430"/>
    </isoform>
</comment>
<comment type="similarity">
    <text evidence="3">Belongs to the SEC23/SEC24 family. SEC24 subfamily.</text>
</comment>
<protein>
    <recommendedName>
        <fullName>Protein transport protein SEC24</fullName>
    </recommendedName>
</protein>
<name>SEC24_CRYNB</name>
<organism>
    <name type="scientific">Cryptococcus neoformans var. neoformans serotype D (strain B-3501A)</name>
    <name type="common">Filobasidiella neoformans</name>
    <dbReference type="NCBI Taxonomy" id="283643"/>
    <lineage>
        <taxon>Eukaryota</taxon>
        <taxon>Fungi</taxon>
        <taxon>Dikarya</taxon>
        <taxon>Basidiomycota</taxon>
        <taxon>Agaricomycotina</taxon>
        <taxon>Tremellomycetes</taxon>
        <taxon>Tremellales</taxon>
        <taxon>Cryptococcaceae</taxon>
        <taxon>Cryptococcus</taxon>
        <taxon>Cryptococcus neoformans species complex</taxon>
    </lineage>
</organism>
<keyword id="KW-0025">Alternative splicing</keyword>
<keyword id="KW-0963">Cytoplasm</keyword>
<keyword id="KW-0968">Cytoplasmic vesicle</keyword>
<keyword id="KW-0256">Endoplasmic reticulum</keyword>
<keyword id="KW-0931">ER-Golgi transport</keyword>
<keyword id="KW-0333">Golgi apparatus</keyword>
<keyword id="KW-0472">Membrane</keyword>
<keyword id="KW-0479">Metal-binding</keyword>
<keyword id="KW-0653">Protein transport</keyword>
<keyword id="KW-0813">Transport</keyword>
<keyword id="KW-0862">Zinc</keyword>
<gene>
    <name type="primary">SEC24</name>
    <name type="ordered locus">CNBB5410</name>
</gene>
<accession>P0CR41</accession>
<accession>Q55X19</accession>
<accession>Q5KMW5</accession>
<accession>Q5KMW6</accession>
<dbReference type="EMBL" id="AAEY01000011">
    <property type="protein sequence ID" value="EAL22368.1"/>
    <property type="molecule type" value="Genomic_DNA"/>
</dbReference>
<dbReference type="RefSeq" id="XP_777015.1">
    <molecule id="P0CR41-1"/>
    <property type="nucleotide sequence ID" value="XM_771922.1"/>
</dbReference>
<dbReference type="SMR" id="P0CR41"/>
<dbReference type="GeneID" id="4934637"/>
<dbReference type="KEGG" id="cnb:CNBB5410"/>
<dbReference type="VEuPathDB" id="FungiDB:CNBB5410"/>
<dbReference type="HOGENOM" id="CLU_004589_2_1_1"/>
<dbReference type="OrthoDB" id="4026at5206"/>
<dbReference type="GO" id="GO:0030127">
    <property type="term" value="C:COPII vesicle coat"/>
    <property type="evidence" value="ECO:0007669"/>
    <property type="project" value="InterPro"/>
</dbReference>
<dbReference type="GO" id="GO:0070971">
    <property type="term" value="C:endoplasmic reticulum exit site"/>
    <property type="evidence" value="ECO:0007669"/>
    <property type="project" value="TreeGrafter"/>
</dbReference>
<dbReference type="GO" id="GO:0005789">
    <property type="term" value="C:endoplasmic reticulum membrane"/>
    <property type="evidence" value="ECO:0007669"/>
    <property type="project" value="UniProtKB-SubCell"/>
</dbReference>
<dbReference type="GO" id="GO:0000139">
    <property type="term" value="C:Golgi membrane"/>
    <property type="evidence" value="ECO:0007669"/>
    <property type="project" value="UniProtKB-SubCell"/>
</dbReference>
<dbReference type="GO" id="GO:0000149">
    <property type="term" value="F:SNARE binding"/>
    <property type="evidence" value="ECO:0007669"/>
    <property type="project" value="TreeGrafter"/>
</dbReference>
<dbReference type="GO" id="GO:0008270">
    <property type="term" value="F:zinc ion binding"/>
    <property type="evidence" value="ECO:0007669"/>
    <property type="project" value="InterPro"/>
</dbReference>
<dbReference type="GO" id="GO:0090110">
    <property type="term" value="P:COPII-coated vesicle cargo loading"/>
    <property type="evidence" value="ECO:0007669"/>
    <property type="project" value="TreeGrafter"/>
</dbReference>
<dbReference type="GO" id="GO:0006886">
    <property type="term" value="P:intracellular protein transport"/>
    <property type="evidence" value="ECO:0007669"/>
    <property type="project" value="InterPro"/>
</dbReference>
<dbReference type="CDD" id="cd01479">
    <property type="entry name" value="Sec24-like"/>
    <property type="match status" value="1"/>
</dbReference>
<dbReference type="CDD" id="cd00201">
    <property type="entry name" value="WW"/>
    <property type="match status" value="1"/>
</dbReference>
<dbReference type="Gene3D" id="2.20.70.10">
    <property type="match status" value="1"/>
</dbReference>
<dbReference type="Gene3D" id="2.60.40.1670">
    <property type="entry name" value="beta-sandwich domain of Sec23/24"/>
    <property type="match status" value="1"/>
</dbReference>
<dbReference type="Gene3D" id="1.20.120.730">
    <property type="entry name" value="Sec23/Sec24 helical domain"/>
    <property type="match status" value="1"/>
</dbReference>
<dbReference type="Gene3D" id="3.40.20.10">
    <property type="entry name" value="Severin"/>
    <property type="match status" value="1"/>
</dbReference>
<dbReference type="Gene3D" id="3.40.50.410">
    <property type="entry name" value="von Willebrand factor, type A domain"/>
    <property type="match status" value="1"/>
</dbReference>
<dbReference type="Gene3D" id="2.30.30.380">
    <property type="entry name" value="Zn-finger domain of Sec23/24"/>
    <property type="match status" value="1"/>
</dbReference>
<dbReference type="InterPro" id="IPR029006">
    <property type="entry name" value="ADF-H/Gelsolin-like_dom_sf"/>
</dbReference>
<dbReference type="InterPro" id="IPR007123">
    <property type="entry name" value="Gelsolin-like_dom"/>
</dbReference>
<dbReference type="InterPro" id="IPR036180">
    <property type="entry name" value="Gelsolin-like_dom_sf"/>
</dbReference>
<dbReference type="InterPro" id="IPR006900">
    <property type="entry name" value="Sec23/24_helical_dom"/>
</dbReference>
<dbReference type="InterPro" id="IPR036175">
    <property type="entry name" value="Sec23/24_helical_dom_sf"/>
</dbReference>
<dbReference type="InterPro" id="IPR006896">
    <property type="entry name" value="Sec23/24_trunk_dom"/>
</dbReference>
<dbReference type="InterPro" id="IPR012990">
    <property type="entry name" value="Sec23_24_beta_S"/>
</dbReference>
<dbReference type="InterPro" id="IPR050550">
    <property type="entry name" value="SEC23_SEC24_subfamily"/>
</dbReference>
<dbReference type="InterPro" id="IPR041742">
    <property type="entry name" value="Sec24-like_trunk_dom"/>
</dbReference>
<dbReference type="InterPro" id="IPR036465">
    <property type="entry name" value="vWFA_dom_sf"/>
</dbReference>
<dbReference type="InterPro" id="IPR001202">
    <property type="entry name" value="WW_dom"/>
</dbReference>
<dbReference type="InterPro" id="IPR036020">
    <property type="entry name" value="WW_dom_sf"/>
</dbReference>
<dbReference type="InterPro" id="IPR006895">
    <property type="entry name" value="Znf_Sec23_Sec24"/>
</dbReference>
<dbReference type="InterPro" id="IPR036174">
    <property type="entry name" value="Znf_Sec23_Sec24_sf"/>
</dbReference>
<dbReference type="PANTHER" id="PTHR13803">
    <property type="entry name" value="SEC24-RELATED PROTEIN"/>
    <property type="match status" value="1"/>
</dbReference>
<dbReference type="PANTHER" id="PTHR13803:SF39">
    <property type="entry name" value="SECRETORY 24AB, ISOFORM A"/>
    <property type="match status" value="1"/>
</dbReference>
<dbReference type="Pfam" id="PF00626">
    <property type="entry name" value="Gelsolin"/>
    <property type="match status" value="1"/>
</dbReference>
<dbReference type="Pfam" id="PF08033">
    <property type="entry name" value="Sec23_BS"/>
    <property type="match status" value="1"/>
</dbReference>
<dbReference type="Pfam" id="PF04815">
    <property type="entry name" value="Sec23_helical"/>
    <property type="match status" value="1"/>
</dbReference>
<dbReference type="Pfam" id="PF04811">
    <property type="entry name" value="Sec23_trunk"/>
    <property type="match status" value="1"/>
</dbReference>
<dbReference type="Pfam" id="PF00397">
    <property type="entry name" value="WW"/>
    <property type="match status" value="1"/>
</dbReference>
<dbReference type="Pfam" id="PF04810">
    <property type="entry name" value="zf-Sec23_Sec24"/>
    <property type="match status" value="1"/>
</dbReference>
<dbReference type="SMART" id="SM00456">
    <property type="entry name" value="WW"/>
    <property type="match status" value="1"/>
</dbReference>
<dbReference type="SUPFAM" id="SSF81995">
    <property type="entry name" value="beta-sandwich domain of Sec23/24"/>
    <property type="match status" value="1"/>
</dbReference>
<dbReference type="SUPFAM" id="SSF82754">
    <property type="entry name" value="C-terminal, gelsolin-like domain of Sec23/24"/>
    <property type="match status" value="1"/>
</dbReference>
<dbReference type="SUPFAM" id="SSF81811">
    <property type="entry name" value="Helical domain of Sec23/24"/>
    <property type="match status" value="1"/>
</dbReference>
<dbReference type="SUPFAM" id="SSF53300">
    <property type="entry name" value="vWA-like"/>
    <property type="match status" value="1"/>
</dbReference>
<dbReference type="SUPFAM" id="SSF51045">
    <property type="entry name" value="WW domain"/>
    <property type="match status" value="1"/>
</dbReference>
<dbReference type="SUPFAM" id="SSF82919">
    <property type="entry name" value="Zn-finger domain of Sec23/24"/>
    <property type="match status" value="1"/>
</dbReference>
<dbReference type="PROSITE" id="PS50020">
    <property type="entry name" value="WW_DOMAIN_2"/>
    <property type="match status" value="1"/>
</dbReference>
<evidence type="ECO:0000250" key="1"/>
<evidence type="ECO:0000255" key="2">
    <source>
        <dbReference type="PROSITE-ProRule" id="PRU00224"/>
    </source>
</evidence>
<evidence type="ECO:0000305" key="3"/>
<sequence>MSQPIMLPQGWEARWDPQANAYIYVDQSTGRSQWEVPLNPTFPTSPTPHAPPQRHGRRAYPSAMYAHAYDTPAPHVGPPQPVAGYAEQGTPQFITPGFEGQQPVQQPPYAAVDHVAGQFQQMNIAPGAAPVAGAAAGAYQGAGYAEKQLHSTKTKTVNLIGLQPDVAALDNPPPPALLPANASVTSSAHSQPDPSYQRCTLNAMPTTQSLLNKSKLPLALVMAPYRSIRETDNDPDVPVVEDGVIARCRRCRAYINPFVTFIEGGNRWKCCMCGLSNEVPQLFDWDQRAEKPADRWARKELNHAVVEFVAPTEYMVRPPQPPVYAFVIDVSSAAIQSGMVAVAARTILESLDSLPNADNRTKVAIIAVSTSLHFFSLPADATEAGMLVVPDLTDVFLPKPVDLLVNLTESRPAIESLLAKLSDMFQDSHTVGSALGSGLQAAHQLIGKIGGKIIALGASLPTIGEGVLKARDDPKLLGTSKESQLLNAGNNWYKTFAIECSKNQVSVDMFLFSGTYTDVATLGCLPRYTAGQTYLYPGFNASRSEDAIKFATEFGKVLAMPIGLEAVIRVRASRGIRMSAFHGNFFIRSTDLLALPVVPQDQNYVIELQIEDDIKGSFVVIQTAVLHTTCYGERRIRVITQAMPTTDSIAELYTSADQIALATYLANKAVERSMSHSLDDARNHVTNRLGEMLTVYKNQVTSAAGGASAQLAVPENLLLLPLLCCALTKHVGLREGASIPPDLRAYAQCLLTTLPCQTLIPYIHPRFYSLHNMPPEAGTIGGDDGAMILPPALNLTSEKLERHGLFLIEDGQNIFLWVGHDAVPRLIQDVFDLASYHELQGGKYTLPRLDNPFSERVCNVVDKTREMRRGVYRPQVYVVKSDAEPALRSWALSLLVEDRMDRMSSYAQYLTTVKSKVNGS</sequence>
<reference key="1">
    <citation type="journal article" date="2005" name="Science">
        <title>The genome of the basidiomycetous yeast and human pathogen Cryptococcus neoformans.</title>
        <authorList>
            <person name="Loftus B.J."/>
            <person name="Fung E."/>
            <person name="Roncaglia P."/>
            <person name="Rowley D."/>
            <person name="Amedeo P."/>
            <person name="Bruno D."/>
            <person name="Vamathevan J."/>
            <person name="Miranda M."/>
            <person name="Anderson I.J."/>
            <person name="Fraser J.A."/>
            <person name="Allen J.E."/>
            <person name="Bosdet I.E."/>
            <person name="Brent M.R."/>
            <person name="Chiu R."/>
            <person name="Doering T.L."/>
            <person name="Donlin M.J."/>
            <person name="D'Souza C.A."/>
            <person name="Fox D.S."/>
            <person name="Grinberg V."/>
            <person name="Fu J."/>
            <person name="Fukushima M."/>
            <person name="Haas B.J."/>
            <person name="Huang J.C."/>
            <person name="Janbon G."/>
            <person name="Jones S.J.M."/>
            <person name="Koo H.L."/>
            <person name="Krzywinski M.I."/>
            <person name="Kwon-Chung K.J."/>
            <person name="Lengeler K.B."/>
            <person name="Maiti R."/>
            <person name="Marra M.A."/>
            <person name="Marra R.E."/>
            <person name="Mathewson C.A."/>
            <person name="Mitchell T.G."/>
            <person name="Pertea M."/>
            <person name="Riggs F.R."/>
            <person name="Salzberg S.L."/>
            <person name="Schein J.E."/>
            <person name="Shvartsbeyn A."/>
            <person name="Shin H."/>
            <person name="Shumway M."/>
            <person name="Specht C.A."/>
            <person name="Suh B.B."/>
            <person name="Tenney A."/>
            <person name="Utterback T.R."/>
            <person name="Wickes B.L."/>
            <person name="Wortman J.R."/>
            <person name="Wye N.H."/>
            <person name="Kronstad J.W."/>
            <person name="Lodge J.K."/>
            <person name="Heitman J."/>
            <person name="Davis R.W."/>
            <person name="Fraser C.M."/>
            <person name="Hyman R.W."/>
        </authorList>
    </citation>
    <scope>NUCLEOTIDE SEQUENCE [LARGE SCALE GENOMIC DNA]</scope>
    <source>
        <strain>B-3501A</strain>
    </source>
</reference>
<feature type="chain" id="PRO_0000410282" description="Protein transport protein SEC24">
    <location>
        <begin position="1"/>
        <end position="920"/>
    </location>
</feature>
<feature type="domain" description="WW" evidence="2">
    <location>
        <begin position="5"/>
        <end position="39"/>
    </location>
</feature>
<feature type="region of interest" description="Zinc finger-like">
    <location>
        <begin position="248"/>
        <end position="273"/>
    </location>
</feature>
<feature type="binding site" evidence="1">
    <location>
        <position position="248"/>
    </location>
    <ligand>
        <name>Zn(2+)</name>
        <dbReference type="ChEBI" id="CHEBI:29105"/>
    </ligand>
</feature>
<feature type="binding site" evidence="1">
    <location>
        <position position="251"/>
    </location>
    <ligand>
        <name>Zn(2+)</name>
        <dbReference type="ChEBI" id="CHEBI:29105"/>
    </ligand>
</feature>
<feature type="binding site" evidence="1">
    <location>
        <position position="270"/>
    </location>
    <ligand>
        <name>Zn(2+)</name>
        <dbReference type="ChEBI" id="CHEBI:29105"/>
    </ligand>
</feature>
<feature type="binding site" evidence="1">
    <location>
        <position position="273"/>
    </location>
    <ligand>
        <name>Zn(2+)</name>
        <dbReference type="ChEBI" id="CHEBI:29105"/>
    </ligand>
</feature>
<feature type="splice variant" id="VSP_041430" description="In isoform 2." evidence="3">
    <location>
        <begin position="1"/>
        <end position="63"/>
    </location>
</feature>